<reference key="1">
    <citation type="journal article" date="2005" name="Genomics">
        <title>Defining a holoprosencephaly locus on human chromosome 14q13 and characterization of potential candidate genes.</title>
        <authorList>
            <person name="Kamnasaran D."/>
            <person name="Chen C.-P."/>
            <person name="Devriendt K."/>
            <person name="Mehta L."/>
            <person name="Cox D.W."/>
        </authorList>
    </citation>
    <scope>NUCLEOTIDE SEQUENCE [MRNA] (ISOFORM 1)</scope>
    <scope>TISSUE SPECIFICITY</scope>
    <scope>DEVELOPMENTAL STAGE</scope>
    <scope>SUBCELLULAR LOCATION</scope>
    <source>
        <tissue>Brain</tissue>
    </source>
</reference>
<reference key="2">
    <citation type="journal article" date="2004" name="Nat. Genet.">
        <title>Complete sequencing and characterization of 21,243 full-length human cDNAs.</title>
        <authorList>
            <person name="Ota T."/>
            <person name="Suzuki Y."/>
            <person name="Nishikawa T."/>
            <person name="Otsuki T."/>
            <person name="Sugiyama T."/>
            <person name="Irie R."/>
            <person name="Wakamatsu A."/>
            <person name="Hayashi K."/>
            <person name="Sato H."/>
            <person name="Nagai K."/>
            <person name="Kimura K."/>
            <person name="Makita H."/>
            <person name="Sekine M."/>
            <person name="Obayashi M."/>
            <person name="Nishi T."/>
            <person name="Shibahara T."/>
            <person name="Tanaka T."/>
            <person name="Ishii S."/>
            <person name="Yamamoto J."/>
            <person name="Saito K."/>
            <person name="Kawai Y."/>
            <person name="Isono Y."/>
            <person name="Nakamura Y."/>
            <person name="Nagahari K."/>
            <person name="Murakami K."/>
            <person name="Yasuda T."/>
            <person name="Iwayanagi T."/>
            <person name="Wagatsuma M."/>
            <person name="Shiratori A."/>
            <person name="Sudo H."/>
            <person name="Hosoiri T."/>
            <person name="Kaku Y."/>
            <person name="Kodaira H."/>
            <person name="Kondo H."/>
            <person name="Sugawara M."/>
            <person name="Takahashi M."/>
            <person name="Kanda K."/>
            <person name="Yokoi T."/>
            <person name="Furuya T."/>
            <person name="Kikkawa E."/>
            <person name="Omura Y."/>
            <person name="Abe K."/>
            <person name="Kamihara K."/>
            <person name="Katsuta N."/>
            <person name="Sato K."/>
            <person name="Tanikawa M."/>
            <person name="Yamazaki M."/>
            <person name="Ninomiya K."/>
            <person name="Ishibashi T."/>
            <person name="Yamashita H."/>
            <person name="Murakawa K."/>
            <person name="Fujimori K."/>
            <person name="Tanai H."/>
            <person name="Kimata M."/>
            <person name="Watanabe M."/>
            <person name="Hiraoka S."/>
            <person name="Chiba Y."/>
            <person name="Ishida S."/>
            <person name="Ono Y."/>
            <person name="Takiguchi S."/>
            <person name="Watanabe S."/>
            <person name="Yosida M."/>
            <person name="Hotuta T."/>
            <person name="Kusano J."/>
            <person name="Kanehori K."/>
            <person name="Takahashi-Fujii A."/>
            <person name="Hara H."/>
            <person name="Tanase T.-O."/>
            <person name="Nomura Y."/>
            <person name="Togiya S."/>
            <person name="Komai F."/>
            <person name="Hara R."/>
            <person name="Takeuchi K."/>
            <person name="Arita M."/>
            <person name="Imose N."/>
            <person name="Musashino K."/>
            <person name="Yuuki H."/>
            <person name="Oshima A."/>
            <person name="Sasaki N."/>
            <person name="Aotsuka S."/>
            <person name="Yoshikawa Y."/>
            <person name="Matsunawa H."/>
            <person name="Ichihara T."/>
            <person name="Shiohata N."/>
            <person name="Sano S."/>
            <person name="Moriya S."/>
            <person name="Momiyama H."/>
            <person name="Satoh N."/>
            <person name="Takami S."/>
            <person name="Terashima Y."/>
            <person name="Suzuki O."/>
            <person name="Nakagawa S."/>
            <person name="Senoh A."/>
            <person name="Mizoguchi H."/>
            <person name="Goto Y."/>
            <person name="Shimizu F."/>
            <person name="Wakebe H."/>
            <person name="Hishigaki H."/>
            <person name="Watanabe T."/>
            <person name="Sugiyama A."/>
            <person name="Takemoto M."/>
            <person name="Kawakami B."/>
            <person name="Yamazaki M."/>
            <person name="Watanabe K."/>
            <person name="Kumagai A."/>
            <person name="Itakura S."/>
            <person name="Fukuzumi Y."/>
            <person name="Fujimori Y."/>
            <person name="Komiyama M."/>
            <person name="Tashiro H."/>
            <person name="Tanigami A."/>
            <person name="Fujiwara T."/>
            <person name="Ono T."/>
            <person name="Yamada K."/>
            <person name="Fujii Y."/>
            <person name="Ozaki K."/>
            <person name="Hirao M."/>
            <person name="Ohmori Y."/>
            <person name="Kawabata A."/>
            <person name="Hikiji T."/>
            <person name="Kobatake N."/>
            <person name="Inagaki H."/>
            <person name="Ikema Y."/>
            <person name="Okamoto S."/>
            <person name="Okitani R."/>
            <person name="Kawakami T."/>
            <person name="Noguchi S."/>
            <person name="Itoh T."/>
            <person name="Shigeta K."/>
            <person name="Senba T."/>
            <person name="Matsumura K."/>
            <person name="Nakajima Y."/>
            <person name="Mizuno T."/>
            <person name="Morinaga M."/>
            <person name="Sasaki M."/>
            <person name="Togashi T."/>
            <person name="Oyama M."/>
            <person name="Hata H."/>
            <person name="Watanabe M."/>
            <person name="Komatsu T."/>
            <person name="Mizushima-Sugano J."/>
            <person name="Satoh T."/>
            <person name="Shirai Y."/>
            <person name="Takahashi Y."/>
            <person name="Nakagawa K."/>
            <person name="Okumura K."/>
            <person name="Nagase T."/>
            <person name="Nomura N."/>
            <person name="Kikuchi H."/>
            <person name="Masuho Y."/>
            <person name="Yamashita R."/>
            <person name="Nakai K."/>
            <person name="Yada T."/>
            <person name="Nakamura Y."/>
            <person name="Ohara O."/>
            <person name="Isogai T."/>
            <person name="Sugano S."/>
        </authorList>
    </citation>
    <scope>NUCLEOTIDE SEQUENCE [LARGE SCALE MRNA] (ISOFORMS 1 AND 2)</scope>
    <source>
        <tissue>Cerebellum</tissue>
        <tissue>Gastric carcinoma</tissue>
    </source>
</reference>
<reference key="3">
    <citation type="submission" date="2005-09" db="EMBL/GenBank/DDBJ databases">
        <authorList>
            <person name="Mural R.J."/>
            <person name="Istrail S."/>
            <person name="Sutton G.G."/>
            <person name="Florea L."/>
            <person name="Halpern A.L."/>
            <person name="Mobarry C.M."/>
            <person name="Lippert R."/>
            <person name="Walenz B."/>
            <person name="Shatkay H."/>
            <person name="Dew I."/>
            <person name="Miller J.R."/>
            <person name="Flanigan M.J."/>
            <person name="Edwards N.J."/>
            <person name="Bolanos R."/>
            <person name="Fasulo D."/>
            <person name="Halldorsson B.V."/>
            <person name="Hannenhalli S."/>
            <person name="Turner R."/>
            <person name="Yooseph S."/>
            <person name="Lu F."/>
            <person name="Nusskern D.R."/>
            <person name="Shue B.C."/>
            <person name="Zheng X.H."/>
            <person name="Zhong F."/>
            <person name="Delcher A.L."/>
            <person name="Huson D.H."/>
            <person name="Kravitz S.A."/>
            <person name="Mouchard L."/>
            <person name="Reinert K."/>
            <person name="Remington K.A."/>
            <person name="Clark A.G."/>
            <person name="Waterman M.S."/>
            <person name="Eichler E.E."/>
            <person name="Adams M.D."/>
            <person name="Hunkapiller M.W."/>
            <person name="Myers E.W."/>
            <person name="Venter J.C."/>
        </authorList>
    </citation>
    <scope>NUCLEOTIDE SEQUENCE [LARGE SCALE GENOMIC DNA]</scope>
</reference>
<reference key="4">
    <citation type="journal article" date="2004" name="Genome Res.">
        <title>The status, quality, and expansion of the NIH full-length cDNA project: the Mammalian Gene Collection (MGC).</title>
        <authorList>
            <consortium name="The MGC Project Team"/>
        </authorList>
    </citation>
    <scope>NUCLEOTIDE SEQUENCE [LARGE SCALE MRNA] (ISOFORMS 1 AND 2)</scope>
    <source>
        <tissue>Bone marrow</tissue>
        <tissue>Brain</tissue>
        <tissue>Placenta</tissue>
    </source>
</reference>
<reference key="5">
    <citation type="submission" date="2003-02" db="EMBL/GenBank/DDBJ databases">
        <title>Full-length cDNA libraries and normalization.</title>
        <authorList>
            <person name="Li W.B."/>
            <person name="Gruber C."/>
            <person name="Jessee J."/>
            <person name="Polayes D."/>
        </authorList>
    </citation>
    <scope>NUCLEOTIDE SEQUENCE [LARGE SCALE MRNA] OF 1-167 (ISOFORM 1)</scope>
    <source>
        <tissue>Placenta</tissue>
    </source>
</reference>
<reference key="6">
    <citation type="submission" date="2004-01" db="EMBL/GenBank/DDBJ databases">
        <title>SEREX-defined rhabdomyosarcoma antigens.</title>
        <authorList>
            <person name="Behrends U."/>
            <person name="Gotz C."/>
            <person name="Mautner J."/>
        </authorList>
    </citation>
    <scope>NUCLEOTIDE SEQUENCE [MRNA] OF 4-453 (ISOFORM 1)</scope>
    <source>
        <tissue>Embryonic rhabdomyosarcoma</tissue>
    </source>
</reference>
<reference key="7">
    <citation type="journal article" date="2002" name="Genes Cells">
        <title>MCM3-binding GANP DNA-primase is associated with a novel phosphatase component G5PR.</title>
        <authorList>
            <person name="Kono Y."/>
            <person name="Maeda K."/>
            <person name="Kuwahara K."/>
            <person name="Yamamoto H."/>
            <person name="Miyamoto E."/>
            <person name="Yonezawa K."/>
            <person name="Takagi K."/>
            <person name="Sakaguchi N."/>
        </authorList>
    </citation>
    <scope>INTERACTION WITH PPP2CA; PPP2R1A AND PPP5C</scope>
    <scope>TISSUE SPECIFICITY</scope>
</reference>
<reference key="8">
    <citation type="journal article" date="2003" name="Nature">
        <title>Proteomic characterization of the human centrosome by protein correlation profiling.</title>
        <authorList>
            <person name="Andersen J.S."/>
            <person name="Wilkinson C.J."/>
            <person name="Mayor T."/>
            <person name="Mortensen P."/>
            <person name="Nigg E.A."/>
            <person name="Mann M."/>
        </authorList>
    </citation>
    <scope>IDENTIFICATION BY MASS SPECTROMETRY</scope>
    <source>
        <tissue>Lymphoblast</tissue>
    </source>
</reference>
<reference key="9">
    <citation type="journal article" date="2014" name="Cancer Lett.">
        <title>Protein phosphatase complex PP5/PPP2R3C dephosphorylates P-glycoprotein/ABCB1 and down-regulates the expression and function.</title>
        <authorList>
            <person name="Katayama K."/>
            <person name="Yamaguchi M."/>
            <person name="Noguchi K."/>
            <person name="Sugimoto Y."/>
        </authorList>
    </citation>
    <scope>INTERACTION WITH TFPI2 AND ABCB1</scope>
    <scope>FUNCTION</scope>
</reference>
<reference key="10">
    <citation type="journal article" date="2019" name="Eur. J. Endocrinol.">
        <title>PPP2R3C gene variants cause syndromic 46,XY gonadal dysgenesis and impaired spermatogenesis in humans.</title>
        <authorList>
            <person name="Guran T."/>
            <person name="Yesil G."/>
            <person name="Turan S."/>
            <person name="Atay Z."/>
            <person name="Bozkurtlar E."/>
            <person name="Aghayev A."/>
            <person name="Gul S."/>
            <person name="Tinay I."/>
            <person name="Aru B."/>
            <person name="Arslan S."/>
            <person name="Koroglu M.K."/>
            <person name="Ercan F."/>
            <person name="Demirel G.Y."/>
            <person name="Eren F.S."/>
            <person name="Karademir B."/>
            <person name="Bereket A."/>
        </authorList>
    </citation>
    <scope>INVOLVEMENT IN MEGD</scope>
    <scope>INVOLVEMENT IN SPGF36</scope>
    <scope>VARIANTS MEGD PRO-103; SER-193 AND SER-350</scope>
</reference>
<dbReference type="EMBL" id="AY157304">
    <property type="protein sequence ID" value="AAO17045.1"/>
    <property type="molecule type" value="mRNA"/>
</dbReference>
<dbReference type="EMBL" id="AK000651">
    <property type="protein sequence ID" value="BAA91308.1"/>
    <property type="molecule type" value="mRNA"/>
</dbReference>
<dbReference type="EMBL" id="AK293717">
    <property type="protein sequence ID" value="BAG57148.1"/>
    <property type="molecule type" value="mRNA"/>
</dbReference>
<dbReference type="EMBL" id="CH471078">
    <property type="protein sequence ID" value="EAW65886.1"/>
    <property type="molecule type" value="Genomic_DNA"/>
</dbReference>
<dbReference type="EMBL" id="CH471078">
    <property type="protein sequence ID" value="EAW65887.1"/>
    <property type="molecule type" value="Genomic_DNA"/>
</dbReference>
<dbReference type="EMBL" id="CH471078">
    <property type="protein sequence ID" value="EAW65889.1"/>
    <property type="molecule type" value="Genomic_DNA"/>
</dbReference>
<dbReference type="EMBL" id="CH471078">
    <property type="protein sequence ID" value="EAW65890.1"/>
    <property type="molecule type" value="Genomic_DNA"/>
</dbReference>
<dbReference type="EMBL" id="BC006823">
    <property type="protein sequence ID" value="AAH06823.1"/>
    <property type="molecule type" value="mRNA"/>
</dbReference>
<dbReference type="EMBL" id="BC010293">
    <property type="protein sequence ID" value="AAH10293.1"/>
    <property type="molecule type" value="mRNA"/>
</dbReference>
<dbReference type="EMBL" id="BC012563">
    <property type="protein sequence ID" value="AAH12563.1"/>
    <property type="molecule type" value="mRNA"/>
</dbReference>
<dbReference type="EMBL" id="BC063438">
    <property type="protein sequence ID" value="AAH63438.1"/>
    <property type="molecule type" value="mRNA"/>
</dbReference>
<dbReference type="EMBL" id="BX248043">
    <property type="protein sequence ID" value="CAD62352.1"/>
    <property type="molecule type" value="mRNA"/>
</dbReference>
<dbReference type="EMBL" id="AY518535">
    <property type="protein sequence ID" value="AAT44532.1"/>
    <property type="status" value="ALT_INIT"/>
    <property type="molecule type" value="mRNA"/>
</dbReference>
<dbReference type="EMBL" id="AY518537">
    <property type="protein sequence ID" value="AAT44533.1"/>
    <property type="status" value="ALT_INIT"/>
    <property type="molecule type" value="mRNA"/>
</dbReference>
<dbReference type="CCDS" id="CCDS9654.1">
    <molecule id="Q969Q6-1"/>
</dbReference>
<dbReference type="RefSeq" id="NP_001292084.1">
    <molecule id="Q969Q6-2"/>
    <property type="nucleotide sequence ID" value="NM_001305155.2"/>
</dbReference>
<dbReference type="RefSeq" id="NP_001292085.1">
    <molecule id="Q969Q6-2"/>
    <property type="nucleotide sequence ID" value="NM_001305156.2"/>
</dbReference>
<dbReference type="RefSeq" id="NP_060387.2">
    <molecule id="Q969Q6-1"/>
    <property type="nucleotide sequence ID" value="NM_017917.3"/>
</dbReference>
<dbReference type="RefSeq" id="XP_005267839.1">
    <molecule id="Q969Q6-1"/>
    <property type="nucleotide sequence ID" value="XM_005267782.5"/>
</dbReference>
<dbReference type="RefSeq" id="XP_054232251.1">
    <molecule id="Q969Q6-1"/>
    <property type="nucleotide sequence ID" value="XM_054376276.1"/>
</dbReference>
<dbReference type="SMR" id="Q969Q6"/>
<dbReference type="BioGRID" id="120344">
    <property type="interactions" value="56"/>
</dbReference>
<dbReference type="CORUM" id="Q969Q6"/>
<dbReference type="FunCoup" id="Q969Q6">
    <property type="interactions" value="4462"/>
</dbReference>
<dbReference type="IntAct" id="Q969Q6">
    <property type="interactions" value="41"/>
</dbReference>
<dbReference type="MINT" id="Q969Q6"/>
<dbReference type="STRING" id="9606.ENSP00000261475"/>
<dbReference type="iPTMnet" id="Q969Q6"/>
<dbReference type="PhosphoSitePlus" id="Q969Q6"/>
<dbReference type="BioMuta" id="PPP2R3C"/>
<dbReference type="DMDM" id="74762643"/>
<dbReference type="jPOST" id="Q969Q6"/>
<dbReference type="MassIVE" id="Q969Q6"/>
<dbReference type="PaxDb" id="9606-ENSP00000261475"/>
<dbReference type="PeptideAtlas" id="Q969Q6"/>
<dbReference type="ProteomicsDB" id="75817">
    <molecule id="Q969Q6-1"/>
</dbReference>
<dbReference type="ProteomicsDB" id="75818">
    <molecule id="Q969Q6-2"/>
</dbReference>
<dbReference type="Pumba" id="Q969Q6"/>
<dbReference type="Antibodypedia" id="23186">
    <property type="antibodies" value="164 antibodies from 27 providers"/>
</dbReference>
<dbReference type="DNASU" id="55012"/>
<dbReference type="Ensembl" id="ENST00000261475.10">
    <molecule id="Q969Q6-1"/>
    <property type="protein sequence ID" value="ENSP00000261475.5"/>
    <property type="gene ID" value="ENSG00000092020.11"/>
</dbReference>
<dbReference type="GeneID" id="55012"/>
<dbReference type="KEGG" id="hsa:55012"/>
<dbReference type="MANE-Select" id="ENST00000261475.10">
    <property type="protein sequence ID" value="ENSP00000261475.5"/>
    <property type="RefSeq nucleotide sequence ID" value="NM_017917.4"/>
    <property type="RefSeq protein sequence ID" value="NP_060387.2"/>
</dbReference>
<dbReference type="UCSC" id="uc001wss.4">
    <molecule id="Q969Q6-1"/>
    <property type="organism name" value="human"/>
</dbReference>
<dbReference type="AGR" id="HGNC:17485"/>
<dbReference type="CTD" id="55012"/>
<dbReference type="DisGeNET" id="55012"/>
<dbReference type="GeneCards" id="PPP2R3C"/>
<dbReference type="HGNC" id="HGNC:17485">
    <property type="gene designation" value="PPP2R3C"/>
</dbReference>
<dbReference type="HPA" id="ENSG00000092020">
    <property type="expression patterns" value="Low tissue specificity"/>
</dbReference>
<dbReference type="MalaCards" id="PPP2R3C"/>
<dbReference type="MIM" id="615902">
    <property type="type" value="gene"/>
</dbReference>
<dbReference type="MIM" id="618419">
    <property type="type" value="phenotype"/>
</dbReference>
<dbReference type="MIM" id="618420">
    <property type="type" value="phenotype"/>
</dbReference>
<dbReference type="neXtProt" id="NX_Q969Q6"/>
<dbReference type="OpenTargets" id="ENSG00000092020"/>
<dbReference type="PharmGKB" id="PA162400008"/>
<dbReference type="VEuPathDB" id="HostDB:ENSG00000092020"/>
<dbReference type="eggNOG" id="KOG2562">
    <property type="taxonomic scope" value="Eukaryota"/>
</dbReference>
<dbReference type="GeneTree" id="ENSGT00940000155583"/>
<dbReference type="HOGENOM" id="CLU_035365_1_0_1"/>
<dbReference type="InParanoid" id="Q969Q6"/>
<dbReference type="OMA" id="HKFWAYE"/>
<dbReference type="OrthoDB" id="10265007at2759"/>
<dbReference type="PAN-GO" id="Q969Q6">
    <property type="GO annotations" value="6 GO annotations based on evolutionary models"/>
</dbReference>
<dbReference type="PhylomeDB" id="Q969Q6"/>
<dbReference type="TreeFam" id="TF318412"/>
<dbReference type="PathwayCommons" id="Q969Q6"/>
<dbReference type="SignaLink" id="Q969Q6"/>
<dbReference type="SIGNOR" id="Q969Q6"/>
<dbReference type="BioGRID-ORCS" id="55012">
    <property type="hits" value="435 hits in 1089 CRISPR screens"/>
</dbReference>
<dbReference type="ChiTaRS" id="PPP2R3C">
    <property type="organism name" value="human"/>
</dbReference>
<dbReference type="GeneWiki" id="PPP2R3C"/>
<dbReference type="GenomeRNAi" id="55012"/>
<dbReference type="Pharos" id="Q969Q6">
    <property type="development level" value="Tbio"/>
</dbReference>
<dbReference type="PRO" id="PR:Q969Q6"/>
<dbReference type="Proteomes" id="UP000005640">
    <property type="component" value="Chromosome 14"/>
</dbReference>
<dbReference type="RNAct" id="Q969Q6">
    <property type="molecule type" value="protein"/>
</dbReference>
<dbReference type="Bgee" id="ENSG00000092020">
    <property type="expression patterns" value="Expressed in right testis and 194 other cell types or tissues"/>
</dbReference>
<dbReference type="ExpressionAtlas" id="Q969Q6">
    <property type="expression patterns" value="baseline and differential"/>
</dbReference>
<dbReference type="GO" id="GO:0015629">
    <property type="term" value="C:actin cytoskeleton"/>
    <property type="evidence" value="ECO:0000314"/>
    <property type="project" value="HPA"/>
</dbReference>
<dbReference type="GO" id="GO:0005813">
    <property type="term" value="C:centrosome"/>
    <property type="evidence" value="ECO:0000314"/>
    <property type="project" value="UniProtKB"/>
</dbReference>
<dbReference type="GO" id="GO:0005929">
    <property type="term" value="C:cilium"/>
    <property type="evidence" value="ECO:0000314"/>
    <property type="project" value="HPA"/>
</dbReference>
<dbReference type="GO" id="GO:0005829">
    <property type="term" value="C:cytosol"/>
    <property type="evidence" value="ECO:0000314"/>
    <property type="project" value="HPA"/>
</dbReference>
<dbReference type="GO" id="GO:0005794">
    <property type="term" value="C:Golgi apparatus"/>
    <property type="evidence" value="ECO:0000314"/>
    <property type="project" value="HPA"/>
</dbReference>
<dbReference type="GO" id="GO:0016604">
    <property type="term" value="C:nuclear body"/>
    <property type="evidence" value="ECO:0000314"/>
    <property type="project" value="HPA"/>
</dbReference>
<dbReference type="GO" id="GO:0005654">
    <property type="term" value="C:nucleoplasm"/>
    <property type="evidence" value="ECO:0000314"/>
    <property type="project" value="HPA"/>
</dbReference>
<dbReference type="GO" id="GO:0046872">
    <property type="term" value="F:metal ion binding"/>
    <property type="evidence" value="ECO:0007669"/>
    <property type="project" value="UniProtKB-KW"/>
</dbReference>
<dbReference type="GO" id="GO:0001782">
    <property type="term" value="P:B cell homeostasis"/>
    <property type="evidence" value="ECO:0000318"/>
    <property type="project" value="GO_Central"/>
</dbReference>
<dbReference type="GO" id="GO:0030865">
    <property type="term" value="P:cortical cytoskeleton organization"/>
    <property type="evidence" value="ECO:0000318"/>
    <property type="project" value="GO_Central"/>
</dbReference>
<dbReference type="GO" id="GO:0000226">
    <property type="term" value="P:microtubule cytoskeleton organization"/>
    <property type="evidence" value="ECO:0000318"/>
    <property type="project" value="GO_Central"/>
</dbReference>
<dbReference type="GO" id="GO:0045579">
    <property type="term" value="P:positive regulation of B cell differentiation"/>
    <property type="evidence" value="ECO:0000318"/>
    <property type="project" value="GO_Central"/>
</dbReference>
<dbReference type="GO" id="GO:0002759">
    <property type="term" value="P:regulation of antimicrobial humoral response"/>
    <property type="evidence" value="ECO:0007669"/>
    <property type="project" value="Ensembl"/>
</dbReference>
<dbReference type="GO" id="GO:0035303">
    <property type="term" value="P:regulation of dephosphorylation"/>
    <property type="evidence" value="ECO:0007669"/>
    <property type="project" value="InterPro"/>
</dbReference>
<dbReference type="GO" id="GO:0051900">
    <property type="term" value="P:regulation of mitochondrial depolarization"/>
    <property type="evidence" value="ECO:0007669"/>
    <property type="project" value="Ensembl"/>
</dbReference>
<dbReference type="GO" id="GO:0048536">
    <property type="term" value="P:spleen development"/>
    <property type="evidence" value="ECO:0007669"/>
    <property type="project" value="Ensembl"/>
</dbReference>
<dbReference type="GO" id="GO:0043029">
    <property type="term" value="P:T cell homeostasis"/>
    <property type="evidence" value="ECO:0000318"/>
    <property type="project" value="GO_Central"/>
</dbReference>
<dbReference type="CDD" id="cd21505">
    <property type="entry name" value="PPP2R3C"/>
    <property type="match status" value="1"/>
</dbReference>
<dbReference type="FunFam" id="1.10.238.10:FF:000091">
    <property type="entry name" value="Serine/threonine-protein phosphatase 2A regulatory subunit B'' subunit gamma"/>
    <property type="match status" value="1"/>
</dbReference>
<dbReference type="FunFam" id="1.10.238.220:FF:000002">
    <property type="entry name" value="Serine/threonine-protein phosphatase 2A regulatory subunit B'' subunit gamma"/>
    <property type="match status" value="1"/>
</dbReference>
<dbReference type="Gene3D" id="1.10.238.220">
    <property type="match status" value="1"/>
</dbReference>
<dbReference type="Gene3D" id="1.10.238.10">
    <property type="entry name" value="EF-hand"/>
    <property type="match status" value="1"/>
</dbReference>
<dbReference type="InterPro" id="IPR011992">
    <property type="entry name" value="EF-hand-dom_pair"/>
</dbReference>
<dbReference type="InterPro" id="IPR041534">
    <property type="entry name" value="EF-hand_13"/>
</dbReference>
<dbReference type="InterPro" id="IPR018247">
    <property type="entry name" value="EF_Hand_1_Ca_BS"/>
</dbReference>
<dbReference type="InterPro" id="IPR039865">
    <property type="entry name" value="PPP2R3C"/>
</dbReference>
<dbReference type="PANTHER" id="PTHR12085">
    <property type="entry name" value="SERINE/THREONINE-PROTEIN PHOSPHATASE 2A REGULATORY SUBUNIT B'' SUBUNIT GAMMA"/>
    <property type="match status" value="1"/>
</dbReference>
<dbReference type="PANTHER" id="PTHR12085:SF3">
    <property type="entry name" value="SERINE_THREONINE-PROTEIN PHOSPHATASE 2A REGULATORY SUBUNIT B'' SUBUNIT GAMMA"/>
    <property type="match status" value="1"/>
</dbReference>
<dbReference type="Pfam" id="PF17958">
    <property type="entry name" value="EF-hand_13"/>
    <property type="match status" value="1"/>
</dbReference>
<dbReference type="SUPFAM" id="SSF47473">
    <property type="entry name" value="EF-hand"/>
    <property type="match status" value="2"/>
</dbReference>
<dbReference type="PROSITE" id="PS00018">
    <property type="entry name" value="EF_HAND_1"/>
    <property type="match status" value="1"/>
</dbReference>
<accession>Q969Q6</accession>
<accession>B4DEN7</accession>
<accession>D3DS97</accession>
<accession>D3DS98</accession>
<accession>Q5GJ55</accession>
<accession>Q5GJ56</accession>
<accession>Q6P4G2</accession>
<accession>Q86TZ3</accession>
<accession>Q9NWR9</accession>
<feature type="chain" id="PRO_0000277833" description="Serine/threonine-protein phosphatase 2A regulatory subunit B'' subunit gamma">
    <location>
        <begin position="1"/>
        <end position="453"/>
    </location>
</feature>
<feature type="domain" description="EF-hand 1">
    <location>
        <begin position="273"/>
        <end position="308"/>
    </location>
</feature>
<feature type="domain" description="EF-hand 2">
    <location>
        <begin position="341"/>
        <end position="376"/>
    </location>
</feature>
<feature type="binding site" evidence="2">
    <location>
        <position position="286"/>
    </location>
    <ligand>
        <name>Ca(2+)</name>
        <dbReference type="ChEBI" id="CHEBI:29108"/>
    </ligand>
</feature>
<feature type="binding site" evidence="2">
    <location>
        <position position="288"/>
    </location>
    <ligand>
        <name>Ca(2+)</name>
        <dbReference type="ChEBI" id="CHEBI:29108"/>
    </ligand>
</feature>
<feature type="binding site" evidence="2">
    <location>
        <position position="290"/>
    </location>
    <ligand>
        <name>Ca(2+)</name>
        <dbReference type="ChEBI" id="CHEBI:29108"/>
    </ligand>
</feature>
<feature type="binding site" evidence="2">
    <location>
        <position position="292"/>
    </location>
    <ligand>
        <name>Ca(2+)</name>
        <dbReference type="ChEBI" id="CHEBI:29108"/>
    </ligand>
</feature>
<feature type="binding site" evidence="2">
    <location>
        <position position="297"/>
    </location>
    <ligand>
        <name>Ca(2+)</name>
        <dbReference type="ChEBI" id="CHEBI:29108"/>
    </ligand>
</feature>
<feature type="splice variant" id="VSP_023113" description="In isoform 2." evidence="7 8">
    <location>
        <begin position="1"/>
        <end position="110"/>
    </location>
</feature>
<feature type="sequence variant" id="VAR_082202" description="In MEGD; dbSNP:rs754106837." evidence="6">
    <original>L</original>
    <variation>P</variation>
    <location>
        <position position="103"/>
    </location>
</feature>
<feature type="sequence variant" id="VAR_082203" description="In MEGD; dbSNP:rs1566411552." evidence="6">
    <original>L</original>
    <variation>S</variation>
    <location>
        <position position="193"/>
    </location>
</feature>
<feature type="sequence variant" id="VAR_082204" description="In MEGD; dbSNP:rs1566684983." evidence="6">
    <original>F</original>
    <variation>S</variation>
    <location>
        <position position="350"/>
    </location>
</feature>
<feature type="sequence conflict" description="In Ref. 2; BAA91308." evidence="9" ref="2">
    <original>H</original>
    <variation>R</variation>
    <location>
        <position position="106"/>
    </location>
</feature>
<feature type="sequence conflict" description="In Ref. 6; AAT44532." evidence="9" ref="6">
    <original>I</original>
    <variation>T</variation>
    <location>
        <position position="240"/>
    </location>
</feature>
<feature type="sequence conflict" description="In Ref. 2; BAA91308." evidence="9" ref="2">
    <original>Y</original>
    <variation>H</variation>
    <location>
        <position position="301"/>
    </location>
</feature>
<gene>
    <name type="primary">PPP2R3C</name>
    <name type="synonym">C14orf10</name>
    <name type="synonym">G5PR</name>
</gene>
<sequence>MDWKEVLRRRLATPNTCPNKKKSEQELKDEEMDLFTKYYSEWKGGRKNTNEFYKTIPRFYYRLPAEDEVLLQKLREESRAVFLQRKSRELLDNEELQNLWFLLDKHQTPPMIGEEAMINYENFLKVGEKAGAKCKQFFTAKVFAKLLHTDSYGRISIMQFFNYVMRKVWLHQTRIGLSLYDVAGQGYLRESDLENYILELIPTLPQLDGLEKSFYSFYVCTAVRKFFFFLDPLRTGKIKIQDILACSFLDDLLELRDEELSKESQETNWFSAPSALRVYGQYLNLDKDHNGMLSKEELSRYGTATMTNVFLDRVFQECLTYDGEMDYKTYLDFVLALENRKEPAALQYIFKLLDIENKGYLNVFSLNYFFRAIQELMKIHGQDPVSFQDVKDEIFDMVKPKDPLKISLQDLINSNQGDTVTTILIDLNGFWTYENREALVANDSENSADLDDT</sequence>
<organism>
    <name type="scientific">Homo sapiens</name>
    <name type="common">Human</name>
    <dbReference type="NCBI Taxonomy" id="9606"/>
    <lineage>
        <taxon>Eukaryota</taxon>
        <taxon>Metazoa</taxon>
        <taxon>Chordata</taxon>
        <taxon>Craniata</taxon>
        <taxon>Vertebrata</taxon>
        <taxon>Euteleostomi</taxon>
        <taxon>Mammalia</taxon>
        <taxon>Eutheria</taxon>
        <taxon>Euarchontoglires</taxon>
        <taxon>Primates</taxon>
        <taxon>Haplorrhini</taxon>
        <taxon>Catarrhini</taxon>
        <taxon>Hominidae</taxon>
        <taxon>Homo</taxon>
    </lineage>
</organism>
<comment type="function">
    <text evidence="1 5">May regulate MCM3AP phosphorylation through phosphatase recruitment (By similarity). May act as a negative regulator of ABCB1 expression and function through the dephosphorylation of ABCB1 by TFPI2/PPP2R3C complex (PubMed:24333728). May play a role in the activation-induced cell death of B-cells (By similarity).</text>
</comment>
<comment type="subunit">
    <text evidence="1 3 5">Interacts with MCM3AP/GANP. Interacts with PPP5C, and the phosphatase 2A core enzyme composed of the PPP2CA catalytic subunit and the constant regulatory subunit PPP2R1A. Finds in a complex with ABCB1, TFPI2 and PPP2R3C; leading to the dephosphorylation of ABCB1.</text>
</comment>
<comment type="interaction">
    <interactant intactId="EBI-2561661">
        <id>Q969Q6</id>
    </interactant>
    <interactant intactId="EBI-10749669">
        <id>Q8IYE0</id>
        <label>CCDC146</label>
    </interactant>
    <organismsDiffer>false</organismsDiffer>
    <experiments>3</experiments>
</comment>
<comment type="interaction">
    <interactant intactId="EBI-2561661">
        <id>Q969Q6</id>
    </interactant>
    <interactant intactId="EBI-2548702">
        <id>Q96DZ9</id>
        <label>CMTM5</label>
    </interactant>
    <organismsDiffer>false</organismsDiffer>
    <experiments>3</experiments>
</comment>
<comment type="interaction">
    <interactant intactId="EBI-2561661">
        <id>Q969Q6</id>
    </interactant>
    <interactant intactId="EBI-744099">
        <id>Q9H0I2</id>
        <label>ENKD1</label>
    </interactant>
    <organismsDiffer>false</organismsDiffer>
    <experiments>3</experiments>
</comment>
<comment type="interaction">
    <interactant intactId="EBI-2561661">
        <id>Q969Q6</id>
    </interactant>
    <interactant intactId="EBI-719941">
        <id>Q3B820</id>
        <label>FAM161A</label>
    </interactant>
    <organismsDiffer>false</organismsDiffer>
    <experiments>3</experiments>
</comment>
<comment type="interaction">
    <interactant intactId="EBI-2561661">
        <id>Q969Q6</id>
    </interactant>
    <interactant intactId="EBI-7225287">
        <id>Q96MY7</id>
        <label>FAM161B</label>
    </interactant>
    <organismsDiffer>false</organismsDiffer>
    <experiments>3</experiments>
</comment>
<comment type="interaction">
    <interactant intactId="EBI-2561661">
        <id>Q969Q6</id>
    </interactant>
    <interactant intactId="EBI-739825">
        <id>Q96BY2</id>
        <label>MOAP1</label>
    </interactant>
    <organismsDiffer>false</organismsDiffer>
    <experiments>3</experiments>
</comment>
<comment type="interaction">
    <interactant intactId="EBI-2561661">
        <id>Q969Q6</id>
    </interactant>
    <interactant intactId="EBI-1055079">
        <id>O15160</id>
        <label>POLR1C</label>
    </interactant>
    <organismsDiffer>false</organismsDiffer>
    <experiments>5</experiments>
</comment>
<comment type="interaction">
    <interactant intactId="EBI-2561661">
        <id>Q969Q6</id>
    </interactant>
    <interactant intactId="EBI-1567797">
        <id>Q8WWY3</id>
        <label>PRPF31</label>
    </interactant>
    <organismsDiffer>false</organismsDiffer>
    <experiments>3</experiments>
</comment>
<comment type="interaction">
    <interactant intactId="EBI-2561661">
        <id>Q969Q6</id>
    </interactant>
    <interactant intactId="EBI-740467">
        <id>O95197</id>
        <label>RTN3</label>
    </interactant>
    <organismsDiffer>false</organismsDiffer>
    <experiments>3</experiments>
</comment>
<comment type="interaction">
    <interactant intactId="EBI-2561661">
        <id>Q969Q6</id>
    </interactant>
    <interactant intactId="EBI-2872322">
        <id>Q9H0W8</id>
        <label>SMG9</label>
    </interactant>
    <organismsDiffer>false</organismsDiffer>
    <experiments>3</experiments>
</comment>
<comment type="subcellular location">
    <subcellularLocation>
        <location evidence="4">Nucleus</location>
    </subcellularLocation>
    <subcellularLocation>
        <location evidence="4">Cytoplasm</location>
    </subcellularLocation>
    <text evidence="4">Excluded from the nucleoli. Localization is cell cycle-dependent. Localizes to the cytoplasm during cytokinesis.</text>
</comment>
<comment type="alternative products">
    <event type="alternative splicing"/>
    <isoform>
        <id>Q969Q6-1</id>
        <name>1</name>
        <sequence type="displayed"/>
    </isoform>
    <isoform>
        <id>Q969Q6-2</id>
        <name>2</name>
        <sequence type="described" ref="VSP_023113"/>
    </isoform>
</comment>
<comment type="tissue specificity">
    <text evidence="3 4">Ubiquitously expressed in brain and other tissues.</text>
</comment>
<comment type="developmental stage">
    <text evidence="4">Expressed in fetal brain.</text>
</comment>
<comment type="disease" evidence="6">
    <disease id="DI-05558">
        <name>Myoectodermal gonadal dysgenesis syndrome</name>
        <acronym>MEGD</acronym>
        <description>An autosomal recessive disorder characterized by 46,XY complete gonadal dysgenesis and extragonadal anomalies, including typical facial gestalt, low birth weight, myopathy, rod and cone dystrophy, anal atresia, omphalocele, sensorineural hearing loss, dry and scaly skin, skeletal abnormalities, renal agenesis and neuromotor delay.</description>
        <dbReference type="MIM" id="618419"/>
    </disease>
    <text>The disease is caused by variants affecting the gene represented in this entry.</text>
</comment>
<comment type="disease" evidence="6">
    <disease id="DI-05555">
        <name>Spermatogenic failure 36</name>
        <acronym>SPGF36</acronym>
        <description>An autosomal dominant infertility disorder due to teratozoospermia, with spermatozoa showing anomalies of the head, acrosome, and nucleus.</description>
        <dbReference type="MIM" id="618420"/>
    </disease>
    <text>The disease may be caused by variants affecting the gene represented in this entry.</text>
</comment>
<comment type="sequence caution" evidence="9">
    <conflict type="erroneous initiation">
        <sequence resource="EMBL-CDS" id="AAT44532"/>
    </conflict>
</comment>
<comment type="sequence caution" evidence="9">
    <conflict type="erroneous initiation">
        <sequence resource="EMBL-CDS" id="AAT44533"/>
    </conflict>
</comment>
<proteinExistence type="evidence at protein level"/>
<name>P2R3C_HUMAN</name>
<protein>
    <recommendedName>
        <fullName>Serine/threonine-protein phosphatase 2A regulatory subunit B'' subunit gamma</fullName>
    </recommendedName>
    <alternativeName>
        <fullName>Protein phosphatase subunit G5PR</fullName>
    </alternativeName>
    <alternativeName>
        <fullName>Rhabdomyosarcoma antigen MU-RMS-40.6A/6C</fullName>
    </alternativeName>
</protein>
<evidence type="ECO:0000250" key="1">
    <source>
        <dbReference type="UniProtKB" id="Q9JK24"/>
    </source>
</evidence>
<evidence type="ECO:0000255" key="2">
    <source>
        <dbReference type="PROSITE-ProRule" id="PRU10142"/>
    </source>
</evidence>
<evidence type="ECO:0000269" key="3">
    <source>
    </source>
</evidence>
<evidence type="ECO:0000269" key="4">
    <source>
    </source>
</evidence>
<evidence type="ECO:0000269" key="5">
    <source>
    </source>
</evidence>
<evidence type="ECO:0000269" key="6">
    <source>
    </source>
</evidence>
<evidence type="ECO:0000303" key="7">
    <source>
    </source>
</evidence>
<evidence type="ECO:0000303" key="8">
    <source>
    </source>
</evidence>
<evidence type="ECO:0000305" key="9"/>
<keyword id="KW-0025">Alternative splicing</keyword>
<keyword id="KW-0106">Calcium</keyword>
<keyword id="KW-0182">Cone-rod dystrophy</keyword>
<keyword id="KW-0963">Cytoplasm</keyword>
<keyword id="KW-0209">Deafness</keyword>
<keyword id="KW-0225">Disease variant</keyword>
<keyword id="KW-0479">Metal-binding</keyword>
<keyword id="KW-0539">Nucleus</keyword>
<keyword id="KW-1267">Proteomics identification</keyword>
<keyword id="KW-1185">Reference proteome</keyword>
<keyword id="KW-0677">Repeat</keyword>